<gene>
    <name type="ordered locus">SAK_0372</name>
</gene>
<accession>Q3K379</accession>
<reference key="1">
    <citation type="journal article" date="2005" name="Proc. Natl. Acad. Sci. U.S.A.">
        <title>Genome analysis of multiple pathogenic isolates of Streptococcus agalactiae: implications for the microbial 'pan-genome'.</title>
        <authorList>
            <person name="Tettelin H."/>
            <person name="Masignani V."/>
            <person name="Cieslewicz M.J."/>
            <person name="Donati C."/>
            <person name="Medini D."/>
            <person name="Ward N.L."/>
            <person name="Angiuoli S.V."/>
            <person name="Crabtree J."/>
            <person name="Jones A.L."/>
            <person name="Durkin A.S."/>
            <person name="DeBoy R.T."/>
            <person name="Davidsen T.M."/>
            <person name="Mora M."/>
            <person name="Scarselli M."/>
            <person name="Margarit y Ros I."/>
            <person name="Peterson J.D."/>
            <person name="Hauser C.R."/>
            <person name="Sundaram J.P."/>
            <person name="Nelson W.C."/>
            <person name="Madupu R."/>
            <person name="Brinkac L.M."/>
            <person name="Dodson R.J."/>
            <person name="Rosovitz M.J."/>
            <person name="Sullivan S.A."/>
            <person name="Daugherty S.C."/>
            <person name="Haft D.H."/>
            <person name="Selengut J."/>
            <person name="Gwinn M.L."/>
            <person name="Zhou L."/>
            <person name="Zafar N."/>
            <person name="Khouri H."/>
            <person name="Radune D."/>
            <person name="Dimitrov G."/>
            <person name="Watkins K."/>
            <person name="O'Connor K.J."/>
            <person name="Smith S."/>
            <person name="Utterback T.R."/>
            <person name="White O."/>
            <person name="Rubens C.E."/>
            <person name="Grandi G."/>
            <person name="Madoff L.C."/>
            <person name="Kasper D.L."/>
            <person name="Telford J.L."/>
            <person name="Wessels M.R."/>
            <person name="Rappuoli R."/>
            <person name="Fraser C.M."/>
        </authorList>
    </citation>
    <scope>NUCLEOTIDE SEQUENCE [LARGE SCALE GENOMIC DNA]</scope>
    <source>
        <strain>ATCC 27591 / A909 / CDC SS700</strain>
    </source>
</reference>
<dbReference type="EMBL" id="CP000114">
    <property type="protein sequence ID" value="ABA45102.1"/>
    <property type="molecule type" value="Genomic_DNA"/>
</dbReference>
<dbReference type="RefSeq" id="WP_000843096.1">
    <property type="nucleotide sequence ID" value="NC_007432.1"/>
</dbReference>
<dbReference type="SMR" id="Q3K379"/>
<dbReference type="KEGG" id="sak:SAK_0372"/>
<dbReference type="HOGENOM" id="CLU_105319_0_0_9"/>
<dbReference type="Gene3D" id="3.40.50.450">
    <property type="match status" value="1"/>
</dbReference>
<dbReference type="HAMAP" id="MF_01575">
    <property type="entry name" value="UPF0398"/>
    <property type="match status" value="1"/>
</dbReference>
<dbReference type="InterPro" id="IPR010697">
    <property type="entry name" value="YspA"/>
</dbReference>
<dbReference type="NCBIfam" id="NF010181">
    <property type="entry name" value="PRK13660.1"/>
    <property type="match status" value="1"/>
</dbReference>
<dbReference type="PANTHER" id="PTHR38440:SF1">
    <property type="entry name" value="UPF0398 PROTEIN SPR0331"/>
    <property type="match status" value="1"/>
</dbReference>
<dbReference type="PANTHER" id="PTHR38440">
    <property type="entry name" value="UPF0398 PROTEIN YPSA"/>
    <property type="match status" value="1"/>
</dbReference>
<dbReference type="Pfam" id="PF06908">
    <property type="entry name" value="YpsA"/>
    <property type="match status" value="1"/>
</dbReference>
<dbReference type="PIRSF" id="PIRSF021290">
    <property type="entry name" value="DUF1273"/>
    <property type="match status" value="1"/>
</dbReference>
<dbReference type="SUPFAM" id="SSF102405">
    <property type="entry name" value="MCP/YpsA-like"/>
    <property type="match status" value="1"/>
</dbReference>
<protein>
    <recommendedName>
        <fullName evidence="1">UPF0398 protein SAK_0372</fullName>
    </recommendedName>
</protein>
<sequence>MKSTILVTGYKNFELGIFQDKDPRITIIKKAIDKDFRRFLENGADWFIFMGNLGFEYWALEVALDLQKEYDFQIATIFTFENHGQNWNEANKAKLALFKQVDFVKYTFPSYENPGQFKQYNHFLINNTQGAYLFYDSENETNLKFLLEMMEKKEAYDISFLTFDRLNEIYEE</sequence>
<proteinExistence type="inferred from homology"/>
<organism>
    <name type="scientific">Streptococcus agalactiae serotype Ia (strain ATCC 27591 / A909 / CDC SS700)</name>
    <dbReference type="NCBI Taxonomy" id="205921"/>
    <lineage>
        <taxon>Bacteria</taxon>
        <taxon>Bacillati</taxon>
        <taxon>Bacillota</taxon>
        <taxon>Bacilli</taxon>
        <taxon>Lactobacillales</taxon>
        <taxon>Streptococcaceae</taxon>
        <taxon>Streptococcus</taxon>
    </lineage>
</organism>
<evidence type="ECO:0000255" key="1">
    <source>
        <dbReference type="HAMAP-Rule" id="MF_01575"/>
    </source>
</evidence>
<comment type="similarity">
    <text evidence="1">Belongs to the UPF0398 family.</text>
</comment>
<name>Y372_STRA1</name>
<feature type="chain" id="PRO_0000267181" description="UPF0398 protein SAK_0372">
    <location>
        <begin position="1"/>
        <end position="172"/>
    </location>
</feature>